<feature type="signal peptide" evidence="2">
    <location>
        <begin position="1"/>
        <end position="31"/>
    </location>
</feature>
<feature type="chain" id="PRO_0000319869" description="Staphylococcal complement inhibitor">
    <location>
        <begin position="32"/>
        <end position="116"/>
    </location>
</feature>
<feature type="region of interest" description="Essential for activity" evidence="1">
    <location>
        <begin position="62"/>
        <end position="79"/>
    </location>
</feature>
<gene>
    <name type="primary">scn</name>
    <name type="ordered locus">SAS1866</name>
</gene>
<dbReference type="EMBL" id="BX571857">
    <property type="protein sequence ID" value="CAG43672.1"/>
    <property type="molecule type" value="Genomic_DNA"/>
</dbReference>
<dbReference type="RefSeq" id="WP_000702263.1">
    <property type="nucleotide sequence ID" value="NC_002953.3"/>
</dbReference>
<dbReference type="BMRB" id="Q6G7Z2"/>
<dbReference type="SMR" id="Q6G7Z2"/>
<dbReference type="KEGG" id="sas:SAS1866"/>
<dbReference type="HOGENOM" id="CLU_166895_0_0_9"/>
<dbReference type="PRO" id="PR:Q6G7Z2"/>
<dbReference type="GO" id="GO:0005576">
    <property type="term" value="C:extracellular region"/>
    <property type="evidence" value="ECO:0007669"/>
    <property type="project" value="UniProtKB-SubCell"/>
</dbReference>
<dbReference type="Gene3D" id="1.20.1270.10">
    <property type="match status" value="1"/>
</dbReference>
<dbReference type="InterPro" id="IPR029048">
    <property type="entry name" value="HSP70_C_sf"/>
</dbReference>
<dbReference type="InterPro" id="IPR021612">
    <property type="entry name" value="SCIN"/>
</dbReference>
<dbReference type="Pfam" id="PF11546">
    <property type="entry name" value="CompInhib_SCIN"/>
    <property type="match status" value="1"/>
</dbReference>
<sequence length="116" mass="13067">MKIRKSILAGTLAIVLASPLVTNLDKNEAQASTSLPTSNEYQNEKLANELKSLLDELNVNELATGSLNTYYKRTIKISGQKAMYALKSKDFKKMSEAKYQLQKIYNEIDEALKSKY</sequence>
<proteinExistence type="inferred from homology"/>
<evidence type="ECO:0000250" key="1"/>
<evidence type="ECO:0000255" key="2"/>
<evidence type="ECO:0000305" key="3"/>
<keyword id="KW-0964">Secreted</keyword>
<keyword id="KW-0732">Signal</keyword>
<keyword id="KW-0843">Virulence</keyword>
<reference key="1">
    <citation type="journal article" date="2004" name="Proc. Natl. Acad. Sci. U.S.A.">
        <title>Complete genomes of two clinical Staphylococcus aureus strains: evidence for the rapid evolution of virulence and drug resistance.</title>
        <authorList>
            <person name="Holden M.T.G."/>
            <person name="Feil E.J."/>
            <person name="Lindsay J.A."/>
            <person name="Peacock S.J."/>
            <person name="Day N.P.J."/>
            <person name="Enright M.C."/>
            <person name="Foster T.J."/>
            <person name="Moore C.E."/>
            <person name="Hurst L."/>
            <person name="Atkin R."/>
            <person name="Barron A."/>
            <person name="Bason N."/>
            <person name="Bentley S.D."/>
            <person name="Chillingworth C."/>
            <person name="Chillingworth T."/>
            <person name="Churcher C."/>
            <person name="Clark L."/>
            <person name="Corton C."/>
            <person name="Cronin A."/>
            <person name="Doggett J."/>
            <person name="Dowd L."/>
            <person name="Feltwell T."/>
            <person name="Hance Z."/>
            <person name="Harris B."/>
            <person name="Hauser H."/>
            <person name="Holroyd S."/>
            <person name="Jagels K."/>
            <person name="James K.D."/>
            <person name="Lennard N."/>
            <person name="Line A."/>
            <person name="Mayes R."/>
            <person name="Moule S."/>
            <person name="Mungall K."/>
            <person name="Ormond D."/>
            <person name="Quail M.A."/>
            <person name="Rabbinowitsch E."/>
            <person name="Rutherford K.M."/>
            <person name="Sanders M."/>
            <person name="Sharp S."/>
            <person name="Simmonds M."/>
            <person name="Stevens K."/>
            <person name="Whitehead S."/>
            <person name="Barrell B.G."/>
            <person name="Spratt B.G."/>
            <person name="Parkhill J."/>
        </authorList>
    </citation>
    <scope>NUCLEOTIDE SEQUENCE [LARGE SCALE GENOMIC DNA]</scope>
    <source>
        <strain>MSSA476</strain>
    </source>
</reference>
<protein>
    <recommendedName>
        <fullName>Staphylococcal complement inhibitor</fullName>
        <shortName>SCIN</shortName>
    </recommendedName>
</protein>
<comment type="function">
    <text evidence="1">Involved in countering the first line of host defense mechanisms. Efficiently inhibits opsonization, phagocytosis and killing of S.aureus by human neutrophils. Acts by binding and stabilizing human C3 convertases (C4b2a and C3bBb), leading to their inactivation. The convertases are no longer able to cleave complement C3, therefore preventing further C3b deposition on the bacterial surface and phagocytosis of the bacterium. Also prevents C5a-induced neutrophil responses (By similarity).</text>
</comment>
<comment type="subcellular location">
    <subcellularLocation>
        <location evidence="1">Secreted</location>
    </subcellularLocation>
</comment>
<comment type="similarity">
    <text evidence="3">Belongs to the SCIN family.</text>
</comment>
<name>SCIN_STAAS</name>
<accession>Q6G7Z2</accession>
<organism>
    <name type="scientific">Staphylococcus aureus (strain MSSA476)</name>
    <dbReference type="NCBI Taxonomy" id="282459"/>
    <lineage>
        <taxon>Bacteria</taxon>
        <taxon>Bacillati</taxon>
        <taxon>Bacillota</taxon>
        <taxon>Bacilli</taxon>
        <taxon>Bacillales</taxon>
        <taxon>Staphylococcaceae</taxon>
        <taxon>Staphylococcus</taxon>
    </lineage>
</organism>